<organism>
    <name type="scientific">Shewanella sp. (strain ANA-3)</name>
    <dbReference type="NCBI Taxonomy" id="94122"/>
    <lineage>
        <taxon>Bacteria</taxon>
        <taxon>Pseudomonadati</taxon>
        <taxon>Pseudomonadota</taxon>
        <taxon>Gammaproteobacteria</taxon>
        <taxon>Alteromonadales</taxon>
        <taxon>Shewanellaceae</taxon>
        <taxon>Shewanella</taxon>
    </lineage>
</organism>
<evidence type="ECO:0000250" key="1"/>
<evidence type="ECO:0000255" key="2">
    <source>
        <dbReference type="HAMAP-Rule" id="MF_00047"/>
    </source>
</evidence>
<dbReference type="EC" id="6.3.2.4" evidence="2"/>
<dbReference type="EMBL" id="CP000469">
    <property type="protein sequence ID" value="ABK48536.1"/>
    <property type="molecule type" value="Genomic_DNA"/>
</dbReference>
<dbReference type="RefSeq" id="WP_011717239.1">
    <property type="nucleotide sequence ID" value="NC_008577.1"/>
</dbReference>
<dbReference type="SMR" id="A0KXL7"/>
<dbReference type="STRING" id="94122.Shewana3_2307"/>
<dbReference type="KEGG" id="shn:Shewana3_2307"/>
<dbReference type="eggNOG" id="COG1181">
    <property type="taxonomic scope" value="Bacteria"/>
</dbReference>
<dbReference type="HOGENOM" id="CLU_039268_0_0_6"/>
<dbReference type="OrthoDB" id="9813261at2"/>
<dbReference type="UniPathway" id="UPA00219"/>
<dbReference type="Proteomes" id="UP000002589">
    <property type="component" value="Chromosome"/>
</dbReference>
<dbReference type="GO" id="GO:0005829">
    <property type="term" value="C:cytosol"/>
    <property type="evidence" value="ECO:0007669"/>
    <property type="project" value="TreeGrafter"/>
</dbReference>
<dbReference type="GO" id="GO:0005524">
    <property type="term" value="F:ATP binding"/>
    <property type="evidence" value="ECO:0007669"/>
    <property type="project" value="UniProtKB-KW"/>
</dbReference>
<dbReference type="GO" id="GO:0008716">
    <property type="term" value="F:D-alanine-D-alanine ligase activity"/>
    <property type="evidence" value="ECO:0007669"/>
    <property type="project" value="UniProtKB-UniRule"/>
</dbReference>
<dbReference type="GO" id="GO:0046872">
    <property type="term" value="F:metal ion binding"/>
    <property type="evidence" value="ECO:0007669"/>
    <property type="project" value="UniProtKB-KW"/>
</dbReference>
<dbReference type="GO" id="GO:0071555">
    <property type="term" value="P:cell wall organization"/>
    <property type="evidence" value="ECO:0007669"/>
    <property type="project" value="UniProtKB-KW"/>
</dbReference>
<dbReference type="GO" id="GO:0009252">
    <property type="term" value="P:peptidoglycan biosynthetic process"/>
    <property type="evidence" value="ECO:0007669"/>
    <property type="project" value="UniProtKB-UniRule"/>
</dbReference>
<dbReference type="GO" id="GO:0008360">
    <property type="term" value="P:regulation of cell shape"/>
    <property type="evidence" value="ECO:0007669"/>
    <property type="project" value="UniProtKB-KW"/>
</dbReference>
<dbReference type="FunFam" id="3.40.50.20:FF:000034">
    <property type="entry name" value="D-alanine--D-alanine ligase"/>
    <property type="match status" value="1"/>
</dbReference>
<dbReference type="Gene3D" id="3.40.50.20">
    <property type="match status" value="1"/>
</dbReference>
<dbReference type="Gene3D" id="3.30.1490.20">
    <property type="entry name" value="ATP-grasp fold, A domain"/>
    <property type="match status" value="1"/>
</dbReference>
<dbReference type="Gene3D" id="3.30.470.20">
    <property type="entry name" value="ATP-grasp fold, B domain"/>
    <property type="match status" value="1"/>
</dbReference>
<dbReference type="HAMAP" id="MF_00047">
    <property type="entry name" value="Dala_Dala_lig"/>
    <property type="match status" value="1"/>
</dbReference>
<dbReference type="InterPro" id="IPR011761">
    <property type="entry name" value="ATP-grasp"/>
</dbReference>
<dbReference type="InterPro" id="IPR013815">
    <property type="entry name" value="ATP_grasp_subdomain_1"/>
</dbReference>
<dbReference type="InterPro" id="IPR000291">
    <property type="entry name" value="D-Ala_lig_Van_CS"/>
</dbReference>
<dbReference type="InterPro" id="IPR005905">
    <property type="entry name" value="D_ala_D_ala"/>
</dbReference>
<dbReference type="InterPro" id="IPR011095">
    <property type="entry name" value="Dala_Dala_lig_C"/>
</dbReference>
<dbReference type="InterPro" id="IPR011127">
    <property type="entry name" value="Dala_Dala_lig_N"/>
</dbReference>
<dbReference type="InterPro" id="IPR016185">
    <property type="entry name" value="PreATP-grasp_dom_sf"/>
</dbReference>
<dbReference type="NCBIfam" id="TIGR01205">
    <property type="entry name" value="D_ala_D_alaTIGR"/>
    <property type="match status" value="1"/>
</dbReference>
<dbReference type="NCBIfam" id="NF002527">
    <property type="entry name" value="PRK01966.1-3"/>
    <property type="match status" value="1"/>
</dbReference>
<dbReference type="NCBIfam" id="NF002528">
    <property type="entry name" value="PRK01966.1-4"/>
    <property type="match status" value="1"/>
</dbReference>
<dbReference type="PANTHER" id="PTHR23132">
    <property type="entry name" value="D-ALANINE--D-ALANINE LIGASE"/>
    <property type="match status" value="1"/>
</dbReference>
<dbReference type="PANTHER" id="PTHR23132:SF25">
    <property type="entry name" value="D-ALANINE--D-ALANINE LIGASE A"/>
    <property type="match status" value="1"/>
</dbReference>
<dbReference type="Pfam" id="PF07478">
    <property type="entry name" value="Dala_Dala_lig_C"/>
    <property type="match status" value="1"/>
</dbReference>
<dbReference type="Pfam" id="PF01820">
    <property type="entry name" value="Dala_Dala_lig_N"/>
    <property type="match status" value="1"/>
</dbReference>
<dbReference type="PIRSF" id="PIRSF039102">
    <property type="entry name" value="Ddl/VanB"/>
    <property type="match status" value="1"/>
</dbReference>
<dbReference type="SUPFAM" id="SSF56059">
    <property type="entry name" value="Glutathione synthetase ATP-binding domain-like"/>
    <property type="match status" value="1"/>
</dbReference>
<dbReference type="SUPFAM" id="SSF52440">
    <property type="entry name" value="PreATP-grasp domain"/>
    <property type="match status" value="1"/>
</dbReference>
<dbReference type="PROSITE" id="PS50975">
    <property type="entry name" value="ATP_GRASP"/>
    <property type="match status" value="1"/>
</dbReference>
<dbReference type="PROSITE" id="PS00843">
    <property type="entry name" value="DALA_DALA_LIGASE_1"/>
    <property type="match status" value="1"/>
</dbReference>
<dbReference type="PROSITE" id="PS00844">
    <property type="entry name" value="DALA_DALA_LIGASE_2"/>
    <property type="match status" value="1"/>
</dbReference>
<feature type="chain" id="PRO_1000074792" description="D-alanine--D-alanine ligase">
    <location>
        <begin position="1"/>
        <end position="336"/>
    </location>
</feature>
<feature type="domain" description="ATP-grasp" evidence="2">
    <location>
        <begin position="124"/>
        <end position="330"/>
    </location>
</feature>
<feature type="binding site" evidence="2">
    <location>
        <begin position="154"/>
        <end position="209"/>
    </location>
    <ligand>
        <name>ATP</name>
        <dbReference type="ChEBI" id="CHEBI:30616"/>
    </ligand>
</feature>
<feature type="binding site" evidence="2">
    <location>
        <position position="284"/>
    </location>
    <ligand>
        <name>Mg(2+)</name>
        <dbReference type="ChEBI" id="CHEBI:18420"/>
        <label>1</label>
    </ligand>
</feature>
<feature type="binding site" evidence="2">
    <location>
        <position position="297"/>
    </location>
    <ligand>
        <name>Mg(2+)</name>
        <dbReference type="ChEBI" id="CHEBI:18420"/>
        <label>1</label>
    </ligand>
</feature>
<feature type="binding site" evidence="2">
    <location>
        <position position="297"/>
    </location>
    <ligand>
        <name>Mg(2+)</name>
        <dbReference type="ChEBI" id="CHEBI:18420"/>
        <label>2</label>
    </ligand>
</feature>
<feature type="binding site" evidence="2">
    <location>
        <position position="299"/>
    </location>
    <ligand>
        <name>Mg(2+)</name>
        <dbReference type="ChEBI" id="CHEBI:18420"/>
        <label>2</label>
    </ligand>
</feature>
<comment type="function">
    <text evidence="2">Cell wall formation.</text>
</comment>
<comment type="catalytic activity">
    <reaction evidence="2">
        <text>2 D-alanine + ATP = D-alanyl-D-alanine + ADP + phosphate + H(+)</text>
        <dbReference type="Rhea" id="RHEA:11224"/>
        <dbReference type="ChEBI" id="CHEBI:15378"/>
        <dbReference type="ChEBI" id="CHEBI:30616"/>
        <dbReference type="ChEBI" id="CHEBI:43474"/>
        <dbReference type="ChEBI" id="CHEBI:57416"/>
        <dbReference type="ChEBI" id="CHEBI:57822"/>
        <dbReference type="ChEBI" id="CHEBI:456216"/>
        <dbReference type="EC" id="6.3.2.4"/>
    </reaction>
</comment>
<comment type="cofactor">
    <cofactor evidence="1">
        <name>Mg(2+)</name>
        <dbReference type="ChEBI" id="CHEBI:18420"/>
    </cofactor>
    <cofactor evidence="1">
        <name>Mn(2+)</name>
        <dbReference type="ChEBI" id="CHEBI:29035"/>
    </cofactor>
    <text evidence="1">Binds 2 magnesium or manganese ions per subunit.</text>
</comment>
<comment type="pathway">
    <text evidence="2">Cell wall biogenesis; peptidoglycan biosynthesis.</text>
</comment>
<comment type="subcellular location">
    <subcellularLocation>
        <location evidence="2">Cytoplasm</location>
    </subcellularLocation>
</comment>
<comment type="similarity">
    <text evidence="2">Belongs to the D-alanine--D-alanine ligase family.</text>
</comment>
<gene>
    <name evidence="2" type="primary">ddl</name>
    <name type="ordered locus">Shewana3_2307</name>
</gene>
<name>DDL_SHESA</name>
<keyword id="KW-0067">ATP-binding</keyword>
<keyword id="KW-0133">Cell shape</keyword>
<keyword id="KW-0961">Cell wall biogenesis/degradation</keyword>
<keyword id="KW-0963">Cytoplasm</keyword>
<keyword id="KW-0436">Ligase</keyword>
<keyword id="KW-0460">Magnesium</keyword>
<keyword id="KW-0464">Manganese</keyword>
<keyword id="KW-0479">Metal-binding</keyword>
<keyword id="KW-0547">Nucleotide-binding</keyword>
<keyword id="KW-0573">Peptidoglycan synthesis</keyword>
<reference key="1">
    <citation type="submission" date="2006-09" db="EMBL/GenBank/DDBJ databases">
        <title>Complete sequence of chromosome 1 of Shewanella sp. ANA-3.</title>
        <authorList>
            <person name="Copeland A."/>
            <person name="Lucas S."/>
            <person name="Lapidus A."/>
            <person name="Barry K."/>
            <person name="Detter J.C."/>
            <person name="Glavina del Rio T."/>
            <person name="Hammon N."/>
            <person name="Israni S."/>
            <person name="Dalin E."/>
            <person name="Tice H."/>
            <person name="Pitluck S."/>
            <person name="Chertkov O."/>
            <person name="Brettin T."/>
            <person name="Bruce D."/>
            <person name="Han C."/>
            <person name="Tapia R."/>
            <person name="Gilna P."/>
            <person name="Schmutz J."/>
            <person name="Larimer F."/>
            <person name="Land M."/>
            <person name="Hauser L."/>
            <person name="Kyrpides N."/>
            <person name="Kim E."/>
            <person name="Newman D."/>
            <person name="Salticov C."/>
            <person name="Konstantinidis K."/>
            <person name="Klappenback J."/>
            <person name="Tiedje J."/>
            <person name="Richardson P."/>
        </authorList>
    </citation>
    <scope>NUCLEOTIDE SEQUENCE [LARGE SCALE GENOMIC DNA]</scope>
    <source>
        <strain>ANA-3</strain>
    </source>
</reference>
<accession>A0KXL7</accession>
<proteinExistence type="inferred from homology"/>
<protein>
    <recommendedName>
        <fullName evidence="2">D-alanine--D-alanine ligase</fullName>
        <ecNumber evidence="2">6.3.2.4</ecNumber>
    </recommendedName>
    <alternativeName>
        <fullName evidence="2">D-Ala-D-Ala ligase</fullName>
    </alternativeName>
    <alternativeName>
        <fullName evidence="2">D-alanylalanine synthetase</fullName>
    </alternativeName>
</protein>
<sequence length="336" mass="37499">MSKINLLLLCGGGSAEHDISLLSANYFETSLAKSEQFNVLRVVLDKFGQYQTAAGDDCELTNNREIRFRDETKPAWPVDYVIPCIHGYPGETGDIQSYFNLIQLPYFGCESEASSNCFNKITAKMWFSALGIPNTPYIFLNQYDDDAIAQTQAALENWGSIFVKAASQGSSVGCYKVDDSSKVADVLKDAFGYAPYVIVEKTIKARELEVAVYEYQGEVVATLPGEIICDSNTFYTFDEKYAKSSKARTDVVAQNVPTDISEQIRAYAIKAFKGMKLRHLSRIDFFLTQDNEILLNEINTFPGSTPISMFPKMLQNHGHDFTEYLSLVINGQLAAK</sequence>